<dbReference type="EC" id="2.3.3.13" evidence="1"/>
<dbReference type="EMBL" id="CP000447">
    <property type="protein sequence ID" value="ABI73645.1"/>
    <property type="molecule type" value="Genomic_DNA"/>
</dbReference>
<dbReference type="RefSeq" id="WP_011639230.1">
    <property type="nucleotide sequence ID" value="NC_008345.1"/>
</dbReference>
<dbReference type="SMR" id="Q07WG9"/>
<dbReference type="STRING" id="318167.Sfri_3820"/>
<dbReference type="KEGG" id="sfr:Sfri_3820"/>
<dbReference type="eggNOG" id="COG0119">
    <property type="taxonomic scope" value="Bacteria"/>
</dbReference>
<dbReference type="HOGENOM" id="CLU_022158_0_1_6"/>
<dbReference type="OrthoDB" id="9803573at2"/>
<dbReference type="UniPathway" id="UPA00048">
    <property type="reaction ID" value="UER00070"/>
</dbReference>
<dbReference type="Proteomes" id="UP000000684">
    <property type="component" value="Chromosome"/>
</dbReference>
<dbReference type="GO" id="GO:0005829">
    <property type="term" value="C:cytosol"/>
    <property type="evidence" value="ECO:0007669"/>
    <property type="project" value="TreeGrafter"/>
</dbReference>
<dbReference type="GO" id="GO:0003852">
    <property type="term" value="F:2-isopropylmalate synthase activity"/>
    <property type="evidence" value="ECO:0007669"/>
    <property type="project" value="UniProtKB-UniRule"/>
</dbReference>
<dbReference type="GO" id="GO:0003985">
    <property type="term" value="F:acetyl-CoA C-acetyltransferase activity"/>
    <property type="evidence" value="ECO:0007669"/>
    <property type="project" value="UniProtKB-UniRule"/>
</dbReference>
<dbReference type="GO" id="GO:0030145">
    <property type="term" value="F:manganese ion binding"/>
    <property type="evidence" value="ECO:0007669"/>
    <property type="project" value="UniProtKB-UniRule"/>
</dbReference>
<dbReference type="GO" id="GO:0009098">
    <property type="term" value="P:L-leucine biosynthetic process"/>
    <property type="evidence" value="ECO:0007669"/>
    <property type="project" value="UniProtKB-UniRule"/>
</dbReference>
<dbReference type="CDD" id="cd07940">
    <property type="entry name" value="DRE_TIM_IPMS"/>
    <property type="match status" value="1"/>
</dbReference>
<dbReference type="FunFam" id="1.10.238.260:FF:000001">
    <property type="entry name" value="2-isopropylmalate synthase"/>
    <property type="match status" value="1"/>
</dbReference>
<dbReference type="FunFam" id="3.20.20.70:FF:000010">
    <property type="entry name" value="2-isopropylmalate synthase"/>
    <property type="match status" value="1"/>
</dbReference>
<dbReference type="FunFam" id="3.30.160.270:FF:000001">
    <property type="entry name" value="2-isopropylmalate synthase"/>
    <property type="match status" value="1"/>
</dbReference>
<dbReference type="Gene3D" id="1.10.238.260">
    <property type="match status" value="1"/>
</dbReference>
<dbReference type="Gene3D" id="3.30.160.270">
    <property type="match status" value="1"/>
</dbReference>
<dbReference type="Gene3D" id="3.20.20.70">
    <property type="entry name" value="Aldolase class I"/>
    <property type="match status" value="1"/>
</dbReference>
<dbReference type="HAMAP" id="MF_01025">
    <property type="entry name" value="LeuA_type1"/>
    <property type="match status" value="1"/>
</dbReference>
<dbReference type="InterPro" id="IPR050073">
    <property type="entry name" value="2-IPM_HCS-like"/>
</dbReference>
<dbReference type="InterPro" id="IPR013709">
    <property type="entry name" value="2-isopropylmalate_synth_dimer"/>
</dbReference>
<dbReference type="InterPro" id="IPR002034">
    <property type="entry name" value="AIPM/Hcit_synth_CS"/>
</dbReference>
<dbReference type="InterPro" id="IPR013785">
    <property type="entry name" value="Aldolase_TIM"/>
</dbReference>
<dbReference type="InterPro" id="IPR054691">
    <property type="entry name" value="LeuA/HCS_post-cat"/>
</dbReference>
<dbReference type="InterPro" id="IPR036230">
    <property type="entry name" value="LeuA_allosteric_dom_sf"/>
</dbReference>
<dbReference type="InterPro" id="IPR005671">
    <property type="entry name" value="LeuA_bact_synth"/>
</dbReference>
<dbReference type="InterPro" id="IPR000891">
    <property type="entry name" value="PYR_CT"/>
</dbReference>
<dbReference type="NCBIfam" id="TIGR00973">
    <property type="entry name" value="leuA_bact"/>
    <property type="match status" value="1"/>
</dbReference>
<dbReference type="NCBIfam" id="NF002084">
    <property type="entry name" value="PRK00915.1-1"/>
    <property type="match status" value="1"/>
</dbReference>
<dbReference type="NCBIfam" id="NF002086">
    <property type="entry name" value="PRK00915.1-3"/>
    <property type="match status" value="1"/>
</dbReference>
<dbReference type="PANTHER" id="PTHR10277:SF9">
    <property type="entry name" value="2-ISOPROPYLMALATE SYNTHASE 1, CHLOROPLASTIC-RELATED"/>
    <property type="match status" value="1"/>
</dbReference>
<dbReference type="PANTHER" id="PTHR10277">
    <property type="entry name" value="HOMOCITRATE SYNTHASE-RELATED"/>
    <property type="match status" value="1"/>
</dbReference>
<dbReference type="Pfam" id="PF22617">
    <property type="entry name" value="HCS_D2"/>
    <property type="match status" value="1"/>
</dbReference>
<dbReference type="Pfam" id="PF00682">
    <property type="entry name" value="HMGL-like"/>
    <property type="match status" value="1"/>
</dbReference>
<dbReference type="Pfam" id="PF08502">
    <property type="entry name" value="LeuA_dimer"/>
    <property type="match status" value="1"/>
</dbReference>
<dbReference type="SMART" id="SM00917">
    <property type="entry name" value="LeuA_dimer"/>
    <property type="match status" value="1"/>
</dbReference>
<dbReference type="SUPFAM" id="SSF110921">
    <property type="entry name" value="2-isopropylmalate synthase LeuA, allosteric (dimerisation) domain"/>
    <property type="match status" value="1"/>
</dbReference>
<dbReference type="SUPFAM" id="SSF51569">
    <property type="entry name" value="Aldolase"/>
    <property type="match status" value="1"/>
</dbReference>
<dbReference type="PROSITE" id="PS00815">
    <property type="entry name" value="AIPM_HOMOCIT_SYNTH_1"/>
    <property type="match status" value="1"/>
</dbReference>
<dbReference type="PROSITE" id="PS00816">
    <property type="entry name" value="AIPM_HOMOCIT_SYNTH_2"/>
    <property type="match status" value="1"/>
</dbReference>
<dbReference type="PROSITE" id="PS50991">
    <property type="entry name" value="PYR_CT"/>
    <property type="match status" value="1"/>
</dbReference>
<protein>
    <recommendedName>
        <fullName evidence="1">2-isopropylmalate synthase</fullName>
        <ecNumber evidence="1">2.3.3.13</ecNumber>
    </recommendedName>
    <alternativeName>
        <fullName evidence="1">Alpha-IPM synthase</fullName>
    </alternativeName>
    <alternativeName>
        <fullName evidence="1">Alpha-isopropylmalate synthase</fullName>
    </alternativeName>
</protein>
<sequence length="522" mass="57086">MSNRVIIFDTTLRDGEQALAASLTVKEKLQIALALERLGVDVMEVGFPVSSPGDFKSVQTIAKTIKNSRVCALSRALEKDIDAAAQALSVADQFRIHTFISTSTIHVESKLKRSFDDVLEMAVNAVKYARRFTDDVEFSCEDAGRTPIDNLCRMVEEAIKAGARTINIPDTVGYTVPSEFGGIIQTLFNRVPNIDQAVISVHCHDDLGLSVANSIAAVEMGARQVECTINGIGERAGNCSLEEIAMILATRKGLLDLDCGINAKEIHRTSSLVSQLCNMPIQANKAIVGTNAFSHSSGIHQDGMLKAKNTYEIMTPESIGLNRNNLNMTSRSGRHVIKHRMEEMGYKPTDYDMDSLYEQFLTLADKKGQVFDYDLEALVFMESQAQDDDKYQLQHMMVHSDSTEGVATATVRIAVDGKDITEAATGNGPVDAAYNAIARATDRKINITNYKLSAKGEGQNALGQVDITAKYNEQMFHGVGLATDVVEASAQALVHVMNLVYRADKVADFKQQIHKERELGGV</sequence>
<evidence type="ECO:0000255" key="1">
    <source>
        <dbReference type="HAMAP-Rule" id="MF_01025"/>
    </source>
</evidence>
<accession>Q07WG9</accession>
<name>LEU1_SHEFN</name>
<proteinExistence type="inferred from homology"/>
<feature type="chain" id="PRO_1000149283" description="2-isopropylmalate synthase">
    <location>
        <begin position="1"/>
        <end position="522"/>
    </location>
</feature>
<feature type="domain" description="Pyruvate carboxyltransferase" evidence="1">
    <location>
        <begin position="5"/>
        <end position="267"/>
    </location>
</feature>
<feature type="region of interest" description="Regulatory domain" evidence="1">
    <location>
        <begin position="392"/>
        <end position="522"/>
    </location>
</feature>
<feature type="binding site" evidence="1">
    <location>
        <position position="14"/>
    </location>
    <ligand>
        <name>Mn(2+)</name>
        <dbReference type="ChEBI" id="CHEBI:29035"/>
    </ligand>
</feature>
<feature type="binding site" evidence="1">
    <location>
        <position position="202"/>
    </location>
    <ligand>
        <name>Mn(2+)</name>
        <dbReference type="ChEBI" id="CHEBI:29035"/>
    </ligand>
</feature>
<feature type="binding site" evidence="1">
    <location>
        <position position="204"/>
    </location>
    <ligand>
        <name>Mn(2+)</name>
        <dbReference type="ChEBI" id="CHEBI:29035"/>
    </ligand>
</feature>
<feature type="binding site" evidence="1">
    <location>
        <position position="238"/>
    </location>
    <ligand>
        <name>Mn(2+)</name>
        <dbReference type="ChEBI" id="CHEBI:29035"/>
    </ligand>
</feature>
<comment type="function">
    <text evidence="1">Catalyzes the condensation of the acetyl group of acetyl-CoA with 3-methyl-2-oxobutanoate (2-ketoisovalerate) to form 3-carboxy-3-hydroxy-4-methylpentanoate (2-isopropylmalate).</text>
</comment>
<comment type="catalytic activity">
    <reaction evidence="1">
        <text>3-methyl-2-oxobutanoate + acetyl-CoA + H2O = (2S)-2-isopropylmalate + CoA + H(+)</text>
        <dbReference type="Rhea" id="RHEA:21524"/>
        <dbReference type="ChEBI" id="CHEBI:1178"/>
        <dbReference type="ChEBI" id="CHEBI:11851"/>
        <dbReference type="ChEBI" id="CHEBI:15377"/>
        <dbReference type="ChEBI" id="CHEBI:15378"/>
        <dbReference type="ChEBI" id="CHEBI:57287"/>
        <dbReference type="ChEBI" id="CHEBI:57288"/>
        <dbReference type="EC" id="2.3.3.13"/>
    </reaction>
</comment>
<comment type="cofactor">
    <cofactor evidence="1">
        <name>Mn(2+)</name>
        <dbReference type="ChEBI" id="CHEBI:29035"/>
    </cofactor>
</comment>
<comment type="pathway">
    <text evidence="1">Amino-acid biosynthesis; L-leucine biosynthesis; L-leucine from 3-methyl-2-oxobutanoate: step 1/4.</text>
</comment>
<comment type="subunit">
    <text evidence="1">Homodimer.</text>
</comment>
<comment type="subcellular location">
    <subcellularLocation>
        <location evidence="1">Cytoplasm</location>
    </subcellularLocation>
</comment>
<comment type="similarity">
    <text evidence="1">Belongs to the alpha-IPM synthase/homocitrate synthase family. LeuA type 1 subfamily.</text>
</comment>
<organism>
    <name type="scientific">Shewanella frigidimarina (strain NCIMB 400)</name>
    <dbReference type="NCBI Taxonomy" id="318167"/>
    <lineage>
        <taxon>Bacteria</taxon>
        <taxon>Pseudomonadati</taxon>
        <taxon>Pseudomonadota</taxon>
        <taxon>Gammaproteobacteria</taxon>
        <taxon>Alteromonadales</taxon>
        <taxon>Shewanellaceae</taxon>
        <taxon>Shewanella</taxon>
    </lineage>
</organism>
<keyword id="KW-0028">Amino-acid biosynthesis</keyword>
<keyword id="KW-0100">Branched-chain amino acid biosynthesis</keyword>
<keyword id="KW-0963">Cytoplasm</keyword>
<keyword id="KW-0432">Leucine biosynthesis</keyword>
<keyword id="KW-0464">Manganese</keyword>
<keyword id="KW-0479">Metal-binding</keyword>
<keyword id="KW-1185">Reference proteome</keyword>
<keyword id="KW-0808">Transferase</keyword>
<gene>
    <name evidence="1" type="primary">leuA</name>
    <name type="ordered locus">Sfri_3820</name>
</gene>
<reference key="1">
    <citation type="submission" date="2006-08" db="EMBL/GenBank/DDBJ databases">
        <title>Complete sequence of Shewanella frigidimarina NCIMB 400.</title>
        <authorList>
            <consortium name="US DOE Joint Genome Institute"/>
            <person name="Copeland A."/>
            <person name="Lucas S."/>
            <person name="Lapidus A."/>
            <person name="Barry K."/>
            <person name="Detter J.C."/>
            <person name="Glavina del Rio T."/>
            <person name="Hammon N."/>
            <person name="Israni S."/>
            <person name="Dalin E."/>
            <person name="Tice H."/>
            <person name="Pitluck S."/>
            <person name="Fredrickson J.K."/>
            <person name="Kolker E."/>
            <person name="McCuel L.A."/>
            <person name="DiChristina T."/>
            <person name="Nealson K.H."/>
            <person name="Newman D."/>
            <person name="Tiedje J.M."/>
            <person name="Zhou J."/>
            <person name="Romine M.F."/>
            <person name="Culley D.E."/>
            <person name="Serres M."/>
            <person name="Chertkov O."/>
            <person name="Brettin T."/>
            <person name="Bruce D."/>
            <person name="Han C."/>
            <person name="Tapia R."/>
            <person name="Gilna P."/>
            <person name="Schmutz J."/>
            <person name="Larimer F."/>
            <person name="Land M."/>
            <person name="Hauser L."/>
            <person name="Kyrpides N."/>
            <person name="Mikhailova N."/>
            <person name="Richardson P."/>
        </authorList>
    </citation>
    <scope>NUCLEOTIDE SEQUENCE [LARGE SCALE GENOMIC DNA]</scope>
    <source>
        <strain>NCIMB 400</strain>
    </source>
</reference>